<keyword id="KW-0963">Cytoplasm</keyword>
<keyword id="KW-0369">Histidine metabolism</keyword>
<keyword id="KW-0378">Hydrolase</keyword>
<keyword id="KW-0408">Iron</keyword>
<keyword id="KW-0479">Metal-binding</keyword>
<keyword id="KW-0862">Zinc</keyword>
<organism>
    <name type="scientific">Staphylococcus aureus (strain Mu3 / ATCC 700698)</name>
    <dbReference type="NCBI Taxonomy" id="418127"/>
    <lineage>
        <taxon>Bacteria</taxon>
        <taxon>Bacillati</taxon>
        <taxon>Bacillota</taxon>
        <taxon>Bacilli</taxon>
        <taxon>Bacillales</taxon>
        <taxon>Staphylococcaceae</taxon>
        <taxon>Staphylococcus</taxon>
    </lineage>
</organism>
<feature type="chain" id="PRO_1000007150" description="Imidazolonepropionase">
    <location>
        <begin position="1"/>
        <end position="412"/>
    </location>
</feature>
<feature type="binding site" evidence="1">
    <location>
        <position position="76"/>
    </location>
    <ligand>
        <name>Fe(3+)</name>
        <dbReference type="ChEBI" id="CHEBI:29034"/>
    </ligand>
</feature>
<feature type="binding site" evidence="1">
    <location>
        <position position="76"/>
    </location>
    <ligand>
        <name>Zn(2+)</name>
        <dbReference type="ChEBI" id="CHEBI:29105"/>
    </ligand>
</feature>
<feature type="binding site" evidence="1">
    <location>
        <position position="78"/>
    </location>
    <ligand>
        <name>Fe(3+)</name>
        <dbReference type="ChEBI" id="CHEBI:29034"/>
    </ligand>
</feature>
<feature type="binding site" evidence="1">
    <location>
        <position position="78"/>
    </location>
    <ligand>
        <name>Zn(2+)</name>
        <dbReference type="ChEBI" id="CHEBI:29105"/>
    </ligand>
</feature>
<feature type="binding site" evidence="1">
    <location>
        <position position="85"/>
    </location>
    <ligand>
        <name>4-imidazolone-5-propanoate</name>
        <dbReference type="ChEBI" id="CHEBI:77893"/>
    </ligand>
</feature>
<feature type="binding site" evidence="1">
    <location>
        <position position="148"/>
    </location>
    <ligand>
        <name>4-imidazolone-5-propanoate</name>
        <dbReference type="ChEBI" id="CHEBI:77893"/>
    </ligand>
</feature>
<feature type="binding site" evidence="1">
    <location>
        <position position="148"/>
    </location>
    <ligand>
        <name>N-formimidoyl-L-glutamate</name>
        <dbReference type="ChEBI" id="CHEBI:58928"/>
    </ligand>
</feature>
<feature type="binding site" evidence="1">
    <location>
        <position position="181"/>
    </location>
    <ligand>
        <name>4-imidazolone-5-propanoate</name>
        <dbReference type="ChEBI" id="CHEBI:77893"/>
    </ligand>
</feature>
<feature type="binding site" evidence="1">
    <location>
        <position position="242"/>
    </location>
    <ligand>
        <name>Fe(3+)</name>
        <dbReference type="ChEBI" id="CHEBI:29034"/>
    </ligand>
</feature>
<feature type="binding site" evidence="1">
    <location>
        <position position="242"/>
    </location>
    <ligand>
        <name>Zn(2+)</name>
        <dbReference type="ChEBI" id="CHEBI:29105"/>
    </ligand>
</feature>
<feature type="binding site" evidence="1">
    <location>
        <position position="245"/>
    </location>
    <ligand>
        <name>4-imidazolone-5-propanoate</name>
        <dbReference type="ChEBI" id="CHEBI:77893"/>
    </ligand>
</feature>
<feature type="binding site" evidence="1">
    <location>
        <position position="317"/>
    </location>
    <ligand>
        <name>Fe(3+)</name>
        <dbReference type="ChEBI" id="CHEBI:29034"/>
    </ligand>
</feature>
<feature type="binding site" evidence="1">
    <location>
        <position position="317"/>
    </location>
    <ligand>
        <name>Zn(2+)</name>
        <dbReference type="ChEBI" id="CHEBI:29105"/>
    </ligand>
</feature>
<feature type="binding site" evidence="1">
    <location>
        <position position="319"/>
    </location>
    <ligand>
        <name>N-formimidoyl-L-glutamate</name>
        <dbReference type="ChEBI" id="CHEBI:58928"/>
    </ligand>
</feature>
<feature type="binding site" evidence="1">
    <location>
        <position position="321"/>
    </location>
    <ligand>
        <name>N-formimidoyl-L-glutamate</name>
        <dbReference type="ChEBI" id="CHEBI:58928"/>
    </ligand>
</feature>
<feature type="binding site" evidence="1">
    <location>
        <position position="322"/>
    </location>
    <ligand>
        <name>4-imidazolone-5-propanoate</name>
        <dbReference type="ChEBI" id="CHEBI:77893"/>
    </ligand>
</feature>
<sequence>MNDLIINHIAELILPKSTDKPLKGKELDELNVVKNGTVVIKDGKIVYAGQHTDDYDATETIDASGKVVSPALVDAHTHLTFGGSREHEMSLKRQGKSYLEILEMGGGILSTVNATRETSEDDLFKKAEHDLLTMIKHGVLAVESKSGYGLDRENELKQLKVSNRLAEKYDLDMKHTFLGPHAVPKEASSNEAFLEEMIALLPEVKQYADFADIFCETGVFTIEQSQHYMQKAKEAGFKVKIHADEIDPLGGLELAIDEQAISADHLVASSDKGKEKLRNSDTVAVLLPATTFYLGKEDYADARGMLDNNGAIALATDYNPGSSVTNNLQLVMAIAALKLKLSPSEVWNAVTVNAAKAIDINAGTINTGDKANLVIWDAPNHEYIPYHFGINHAEKVIKDGKVIVDNTLSFKA</sequence>
<comment type="function">
    <text evidence="1">Catalyzes the hydrolytic cleavage of the carbon-nitrogen bond in imidazolone-5-propanoate to yield N-formimidoyl-L-glutamate. It is the third step in the universal histidine degradation pathway.</text>
</comment>
<comment type="catalytic activity">
    <reaction evidence="1">
        <text>4-imidazolone-5-propanoate + H2O = N-formimidoyl-L-glutamate</text>
        <dbReference type="Rhea" id="RHEA:23660"/>
        <dbReference type="ChEBI" id="CHEBI:15377"/>
        <dbReference type="ChEBI" id="CHEBI:58928"/>
        <dbReference type="ChEBI" id="CHEBI:77893"/>
        <dbReference type="EC" id="3.5.2.7"/>
    </reaction>
</comment>
<comment type="cofactor">
    <cofactor evidence="1">
        <name>Zn(2+)</name>
        <dbReference type="ChEBI" id="CHEBI:29105"/>
    </cofactor>
    <cofactor evidence="1">
        <name>Fe(3+)</name>
        <dbReference type="ChEBI" id="CHEBI:29034"/>
    </cofactor>
    <text evidence="1">Binds 1 zinc or iron ion per subunit.</text>
</comment>
<comment type="pathway">
    <text evidence="1">Amino-acid degradation; L-histidine degradation into L-glutamate; N-formimidoyl-L-glutamate from L-histidine: step 3/3.</text>
</comment>
<comment type="subcellular location">
    <subcellularLocation>
        <location evidence="1">Cytoplasm</location>
    </subcellularLocation>
</comment>
<comment type="similarity">
    <text evidence="1">Belongs to the metallo-dependent hydrolases superfamily. HutI family.</text>
</comment>
<name>HUTI_STAA1</name>
<dbReference type="EC" id="3.5.2.7" evidence="1"/>
<dbReference type="EMBL" id="AP009324">
    <property type="protein sequence ID" value="BAF79197.1"/>
    <property type="molecule type" value="Genomic_DNA"/>
</dbReference>
<dbReference type="RefSeq" id="WP_000998753.1">
    <property type="nucleotide sequence ID" value="NC_009782.1"/>
</dbReference>
<dbReference type="SMR" id="A7X5T3"/>
<dbReference type="KEGG" id="saw:SAHV_2314"/>
<dbReference type="HOGENOM" id="CLU_041647_0_1_9"/>
<dbReference type="UniPathway" id="UPA00379">
    <property type="reaction ID" value="UER00551"/>
</dbReference>
<dbReference type="GO" id="GO:0005737">
    <property type="term" value="C:cytoplasm"/>
    <property type="evidence" value="ECO:0007669"/>
    <property type="project" value="UniProtKB-SubCell"/>
</dbReference>
<dbReference type="GO" id="GO:0050480">
    <property type="term" value="F:imidazolonepropionase activity"/>
    <property type="evidence" value="ECO:0007669"/>
    <property type="project" value="UniProtKB-UniRule"/>
</dbReference>
<dbReference type="GO" id="GO:0005506">
    <property type="term" value="F:iron ion binding"/>
    <property type="evidence" value="ECO:0007669"/>
    <property type="project" value="UniProtKB-UniRule"/>
</dbReference>
<dbReference type="GO" id="GO:0008270">
    <property type="term" value="F:zinc ion binding"/>
    <property type="evidence" value="ECO:0007669"/>
    <property type="project" value="UniProtKB-UniRule"/>
</dbReference>
<dbReference type="GO" id="GO:0019556">
    <property type="term" value="P:L-histidine catabolic process to glutamate and formamide"/>
    <property type="evidence" value="ECO:0007669"/>
    <property type="project" value="UniProtKB-UniPathway"/>
</dbReference>
<dbReference type="GO" id="GO:0019557">
    <property type="term" value="P:L-histidine catabolic process to glutamate and formate"/>
    <property type="evidence" value="ECO:0007669"/>
    <property type="project" value="UniProtKB-UniPathway"/>
</dbReference>
<dbReference type="CDD" id="cd01296">
    <property type="entry name" value="Imidazolone-5PH"/>
    <property type="match status" value="1"/>
</dbReference>
<dbReference type="FunFam" id="3.20.20.140:FF:000007">
    <property type="entry name" value="Imidazolonepropionase"/>
    <property type="match status" value="1"/>
</dbReference>
<dbReference type="Gene3D" id="3.20.20.140">
    <property type="entry name" value="Metal-dependent hydrolases"/>
    <property type="match status" value="1"/>
</dbReference>
<dbReference type="Gene3D" id="2.30.40.10">
    <property type="entry name" value="Urease, subunit C, domain 1"/>
    <property type="match status" value="1"/>
</dbReference>
<dbReference type="HAMAP" id="MF_00372">
    <property type="entry name" value="HutI"/>
    <property type="match status" value="1"/>
</dbReference>
<dbReference type="InterPro" id="IPR006680">
    <property type="entry name" value="Amidohydro-rel"/>
</dbReference>
<dbReference type="InterPro" id="IPR005920">
    <property type="entry name" value="HutI"/>
</dbReference>
<dbReference type="InterPro" id="IPR011059">
    <property type="entry name" value="Metal-dep_hydrolase_composite"/>
</dbReference>
<dbReference type="InterPro" id="IPR032466">
    <property type="entry name" value="Metal_Hydrolase"/>
</dbReference>
<dbReference type="NCBIfam" id="TIGR01224">
    <property type="entry name" value="hutI"/>
    <property type="match status" value="1"/>
</dbReference>
<dbReference type="PANTHER" id="PTHR42752">
    <property type="entry name" value="IMIDAZOLONEPROPIONASE"/>
    <property type="match status" value="1"/>
</dbReference>
<dbReference type="PANTHER" id="PTHR42752:SF1">
    <property type="entry name" value="IMIDAZOLONEPROPIONASE-RELATED"/>
    <property type="match status" value="1"/>
</dbReference>
<dbReference type="Pfam" id="PF01979">
    <property type="entry name" value="Amidohydro_1"/>
    <property type="match status" value="1"/>
</dbReference>
<dbReference type="SUPFAM" id="SSF51338">
    <property type="entry name" value="Composite domain of metallo-dependent hydrolases"/>
    <property type="match status" value="1"/>
</dbReference>
<dbReference type="SUPFAM" id="SSF51556">
    <property type="entry name" value="Metallo-dependent hydrolases"/>
    <property type="match status" value="1"/>
</dbReference>
<accession>A7X5T3</accession>
<evidence type="ECO:0000255" key="1">
    <source>
        <dbReference type="HAMAP-Rule" id="MF_00372"/>
    </source>
</evidence>
<reference key="1">
    <citation type="journal article" date="2008" name="Antimicrob. Agents Chemother.">
        <title>Mutated response regulator graR is responsible for phenotypic conversion of Staphylococcus aureus from heterogeneous vancomycin-intermediate resistance to vancomycin-intermediate resistance.</title>
        <authorList>
            <person name="Neoh H.-M."/>
            <person name="Cui L."/>
            <person name="Yuzawa H."/>
            <person name="Takeuchi F."/>
            <person name="Matsuo M."/>
            <person name="Hiramatsu K."/>
        </authorList>
    </citation>
    <scope>NUCLEOTIDE SEQUENCE [LARGE SCALE GENOMIC DNA]</scope>
    <source>
        <strain>Mu3 / ATCC 700698</strain>
    </source>
</reference>
<protein>
    <recommendedName>
        <fullName evidence="1">Imidazolonepropionase</fullName>
        <ecNumber evidence="1">3.5.2.7</ecNumber>
    </recommendedName>
    <alternativeName>
        <fullName evidence="1">Imidazolone-5-propionate hydrolase</fullName>
    </alternativeName>
</protein>
<proteinExistence type="inferred from homology"/>
<gene>
    <name evidence="1" type="primary">hutI</name>
    <name type="ordered locus">SAHV_2314</name>
</gene>